<accession>A9VRN3</accession>
<gene>
    <name evidence="1" type="primary">thiM</name>
    <name type="ordered locus">BcerKBAB4_0357</name>
</gene>
<evidence type="ECO:0000255" key="1">
    <source>
        <dbReference type="HAMAP-Rule" id="MF_00228"/>
    </source>
</evidence>
<proteinExistence type="inferred from homology"/>
<feature type="chain" id="PRO_1000100409" description="Hydroxyethylthiazole kinase">
    <location>
        <begin position="1"/>
        <end position="269"/>
    </location>
</feature>
<feature type="binding site" evidence="1">
    <location>
        <position position="45"/>
    </location>
    <ligand>
        <name>substrate</name>
    </ligand>
</feature>
<feature type="binding site" evidence="1">
    <location>
        <position position="121"/>
    </location>
    <ligand>
        <name>ATP</name>
        <dbReference type="ChEBI" id="CHEBI:30616"/>
    </ligand>
</feature>
<feature type="binding site" evidence="1">
    <location>
        <position position="167"/>
    </location>
    <ligand>
        <name>ATP</name>
        <dbReference type="ChEBI" id="CHEBI:30616"/>
    </ligand>
</feature>
<feature type="binding site" evidence="1">
    <location>
        <position position="194"/>
    </location>
    <ligand>
        <name>substrate</name>
    </ligand>
</feature>
<dbReference type="EC" id="2.7.1.50" evidence="1"/>
<dbReference type="EMBL" id="CP000903">
    <property type="protein sequence ID" value="ABY41623.1"/>
    <property type="molecule type" value="Genomic_DNA"/>
</dbReference>
<dbReference type="RefSeq" id="WP_002140242.1">
    <property type="nucleotide sequence ID" value="NC_010184.1"/>
</dbReference>
<dbReference type="SMR" id="A9VRN3"/>
<dbReference type="KEGG" id="bwe:BcerKBAB4_0357"/>
<dbReference type="eggNOG" id="COG2145">
    <property type="taxonomic scope" value="Bacteria"/>
</dbReference>
<dbReference type="HOGENOM" id="CLU_019943_0_1_9"/>
<dbReference type="UniPathway" id="UPA00060">
    <property type="reaction ID" value="UER00139"/>
</dbReference>
<dbReference type="Proteomes" id="UP000002154">
    <property type="component" value="Chromosome"/>
</dbReference>
<dbReference type="GO" id="GO:0005524">
    <property type="term" value="F:ATP binding"/>
    <property type="evidence" value="ECO:0007669"/>
    <property type="project" value="UniProtKB-UniRule"/>
</dbReference>
<dbReference type="GO" id="GO:0004417">
    <property type="term" value="F:hydroxyethylthiazole kinase activity"/>
    <property type="evidence" value="ECO:0007669"/>
    <property type="project" value="UniProtKB-UniRule"/>
</dbReference>
<dbReference type="GO" id="GO:0000287">
    <property type="term" value="F:magnesium ion binding"/>
    <property type="evidence" value="ECO:0007669"/>
    <property type="project" value="UniProtKB-UniRule"/>
</dbReference>
<dbReference type="GO" id="GO:0009228">
    <property type="term" value="P:thiamine biosynthetic process"/>
    <property type="evidence" value="ECO:0007669"/>
    <property type="project" value="UniProtKB-KW"/>
</dbReference>
<dbReference type="GO" id="GO:0009229">
    <property type="term" value="P:thiamine diphosphate biosynthetic process"/>
    <property type="evidence" value="ECO:0007669"/>
    <property type="project" value="UniProtKB-UniRule"/>
</dbReference>
<dbReference type="CDD" id="cd01170">
    <property type="entry name" value="THZ_kinase"/>
    <property type="match status" value="1"/>
</dbReference>
<dbReference type="FunFam" id="3.40.1190.20:FF:000027">
    <property type="entry name" value="Hydroxyethylthiazole kinase"/>
    <property type="match status" value="1"/>
</dbReference>
<dbReference type="Gene3D" id="3.40.1190.20">
    <property type="match status" value="1"/>
</dbReference>
<dbReference type="HAMAP" id="MF_00228">
    <property type="entry name" value="Thz_kinase"/>
    <property type="match status" value="1"/>
</dbReference>
<dbReference type="InterPro" id="IPR000417">
    <property type="entry name" value="Hyethyz_kinase"/>
</dbReference>
<dbReference type="InterPro" id="IPR029056">
    <property type="entry name" value="Ribokinase-like"/>
</dbReference>
<dbReference type="NCBIfam" id="NF006830">
    <property type="entry name" value="PRK09355.1"/>
    <property type="match status" value="1"/>
</dbReference>
<dbReference type="NCBIfam" id="TIGR00694">
    <property type="entry name" value="thiM"/>
    <property type="match status" value="1"/>
</dbReference>
<dbReference type="Pfam" id="PF02110">
    <property type="entry name" value="HK"/>
    <property type="match status" value="1"/>
</dbReference>
<dbReference type="PIRSF" id="PIRSF000513">
    <property type="entry name" value="Thz_kinase"/>
    <property type="match status" value="1"/>
</dbReference>
<dbReference type="PRINTS" id="PR01099">
    <property type="entry name" value="HYETHTZKNASE"/>
</dbReference>
<dbReference type="SUPFAM" id="SSF53613">
    <property type="entry name" value="Ribokinase-like"/>
    <property type="match status" value="1"/>
</dbReference>
<name>THIM_BACMK</name>
<protein>
    <recommendedName>
        <fullName evidence="1">Hydroxyethylthiazole kinase</fullName>
        <ecNumber evidence="1">2.7.1.50</ecNumber>
    </recommendedName>
    <alternativeName>
        <fullName evidence="1">4-methyl-5-beta-hydroxyethylthiazole kinase</fullName>
        <shortName evidence="1">TH kinase</shortName>
        <shortName evidence="1">Thz kinase</shortName>
    </alternativeName>
</protein>
<keyword id="KW-0067">ATP-binding</keyword>
<keyword id="KW-0418">Kinase</keyword>
<keyword id="KW-0460">Magnesium</keyword>
<keyword id="KW-0479">Metal-binding</keyword>
<keyword id="KW-0547">Nucleotide-binding</keyword>
<keyword id="KW-0784">Thiamine biosynthesis</keyword>
<keyword id="KW-0808">Transferase</keyword>
<sequence length="269" mass="28328">MNMKEISKVVDLVRESNPLVHNITNVVVTNFTANGLLALGASPVMAYAKEEVAEMASIAGALVLNMGTLRPEEVEAMLLAGKSANKNDVPVLFDPVGAGATSYRTEVARYIPAEIDLAVIRGNAAEIANVINEKWEIKGVDAGTGNGNVVNIAKQAADELNTVAVITGQEDVVTDGERTILIRNGHPILTKVTGTGCLLTSVIGAFVAVEKDYVKAAVAALTFYGVAAEIAASKTVENGPGSFQIEFLNQLANTTSDDIEKYGKIEVIQ</sequence>
<reference key="1">
    <citation type="journal article" date="2008" name="Chem. Biol. Interact.">
        <title>Extending the Bacillus cereus group genomics to putative food-borne pathogens of different toxicity.</title>
        <authorList>
            <person name="Lapidus A."/>
            <person name="Goltsman E."/>
            <person name="Auger S."/>
            <person name="Galleron N."/>
            <person name="Segurens B."/>
            <person name="Dossat C."/>
            <person name="Land M.L."/>
            <person name="Broussolle V."/>
            <person name="Brillard J."/>
            <person name="Guinebretiere M.-H."/>
            <person name="Sanchis V."/>
            <person name="Nguen-the C."/>
            <person name="Lereclus D."/>
            <person name="Richardson P."/>
            <person name="Wincker P."/>
            <person name="Weissenbach J."/>
            <person name="Ehrlich S.D."/>
            <person name="Sorokin A."/>
        </authorList>
    </citation>
    <scope>NUCLEOTIDE SEQUENCE [LARGE SCALE GENOMIC DNA]</scope>
    <source>
        <strain>KBAB4</strain>
    </source>
</reference>
<comment type="function">
    <text evidence="1">Catalyzes the phosphorylation of the hydroxyl group of 4-methyl-5-beta-hydroxyethylthiazole (THZ).</text>
</comment>
<comment type="catalytic activity">
    <reaction evidence="1">
        <text>5-(2-hydroxyethyl)-4-methylthiazole + ATP = 4-methyl-5-(2-phosphooxyethyl)-thiazole + ADP + H(+)</text>
        <dbReference type="Rhea" id="RHEA:24212"/>
        <dbReference type="ChEBI" id="CHEBI:15378"/>
        <dbReference type="ChEBI" id="CHEBI:17957"/>
        <dbReference type="ChEBI" id="CHEBI:30616"/>
        <dbReference type="ChEBI" id="CHEBI:58296"/>
        <dbReference type="ChEBI" id="CHEBI:456216"/>
        <dbReference type="EC" id="2.7.1.50"/>
    </reaction>
</comment>
<comment type="cofactor">
    <cofactor evidence="1">
        <name>Mg(2+)</name>
        <dbReference type="ChEBI" id="CHEBI:18420"/>
    </cofactor>
</comment>
<comment type="pathway">
    <text evidence="1">Cofactor biosynthesis; thiamine diphosphate biosynthesis; 4-methyl-5-(2-phosphoethyl)-thiazole from 5-(2-hydroxyethyl)-4-methylthiazole: step 1/1.</text>
</comment>
<comment type="similarity">
    <text evidence="1">Belongs to the Thz kinase family.</text>
</comment>
<organism>
    <name type="scientific">Bacillus mycoides (strain KBAB4)</name>
    <name type="common">Bacillus weihenstephanensis</name>
    <dbReference type="NCBI Taxonomy" id="315730"/>
    <lineage>
        <taxon>Bacteria</taxon>
        <taxon>Bacillati</taxon>
        <taxon>Bacillota</taxon>
        <taxon>Bacilli</taxon>
        <taxon>Bacillales</taxon>
        <taxon>Bacillaceae</taxon>
        <taxon>Bacillus</taxon>
        <taxon>Bacillus cereus group</taxon>
    </lineage>
</organism>